<comment type="function">
    <text evidence="1">Myosins are actin-based motor molecules with ATPase activity. Unconventional myosins serve in intracellular movements. Their highly divergent tails are presumed to bind to membranous compartments, which would be moved relative to actin filaments (By similarity).</text>
</comment>
<comment type="subcellular location">
    <subcellularLocation>
        <location>Cell membrane</location>
        <topology>Peripheral membrane protein</topology>
    </subcellularLocation>
    <subcellularLocation>
        <location>Cytoplasm</location>
    </subcellularLocation>
</comment>
<comment type="domain">
    <text>This protein differs from the typical myosin heavy chain structure in having head and tail domains but no discernible neck domain.</text>
</comment>
<comment type="similarity">
    <text evidence="4">Belongs to the TRAFAC class myosin-kinesin ATPase superfamily. Myosin family.</text>
</comment>
<evidence type="ECO:0000250" key="1"/>
<evidence type="ECO:0000255" key="2"/>
<evidence type="ECO:0000255" key="3">
    <source>
        <dbReference type="PROSITE-ProRule" id="PRU00782"/>
    </source>
</evidence>
<evidence type="ECO:0000305" key="4"/>
<sequence length="822" mass="91063">MAAKPEQDCKTAAALIRAGSLIEGVESAGKDFLVWTTQGPAVKKDPDLLFSLCRVLPGSTQQTLKLQQVEPTADSQELTVQAKEVWQANPGIDPLTYGDIGGLPHTNEPCVLDFLARRYQSKVIYTTAEPLIVAVNPFQDLKNAGPDTIALYRDAPDVDKLPPHVFYASRRAMTNMHQLKKPQTIIVSGESGAGKTETTKMLMKYLATSAGGNLDLKIQTAIMAANPVLEAFGNAKTVRNNNSSRFGRFMLLDVAREGGIQHGKVVAFLLEKSRIVCQDKDERNYHIFYQFLKGAPGHMRQRYMLQPLEAYTFINPHCLDAPGIVDTEDFEQTVKSLESMNMTETETCTIWSIVSGVLLMGNAKPTGKTEAGVENAACFVGESEAALRNACSLLFLDYPSILHELTVKTTYAGSNKIESRWTVPDSEMLRASLAKGMFEQLFLWIIRKLNADIEPKGGSFDVFMGLLDIFGFEVFQNNSLEQLFINITNEVLQRNFTDIVFEKELQLYSKEGISSKKIEYTTNEKLIETLLGKGTSVLAALEDQCISPSGTDEKFVSSLASKLAGNKCFIPSKNTKSLEFTVVHTIGKVIYNADGFAFKNKDVLRPEIIEITRASTNDVVRGLFEGVKVEKGKMAKGMLIGSQFMTQLKGLMEVIQKTESHFIRCIKPNDDKVPLKWVNSKVLIQLHALSILEALHLRQLAFSYRRTFEEFAAQFRFINLGVSNKPGADAKTICVELLKSTSISADEYALGKTMVFLKPQAAKMLVRLQREALSAWEPLVGVFEGMTVLKRAKQLSTGRAVPATRICANVRRKLVQAGIKVC</sequence>
<feature type="chain" id="PRO_0000123379" description="Myosin-D">
    <location>
        <begin position="1"/>
        <end position="822"/>
    </location>
</feature>
<feature type="domain" description="Myosin motor" evidence="3">
    <location>
        <begin position="95"/>
        <end position="770"/>
    </location>
</feature>
<feature type="region of interest" description="Actin-binding" evidence="2">
    <location>
        <begin position="660"/>
        <end position="670"/>
    </location>
</feature>
<feature type="region of interest" description="Tail">
    <location>
        <begin position="772"/>
        <end position="822"/>
    </location>
</feature>
<feature type="binding site" evidence="1">
    <location>
        <begin position="189"/>
        <end position="196"/>
    </location>
    <ligand>
        <name>ATP</name>
        <dbReference type="ChEBI" id="CHEBI:30616"/>
    </ligand>
</feature>
<name>MYOD_TOXGO</name>
<accession>Q9XYF6</accession>
<dbReference type="EMBL" id="AF105118">
    <property type="protein sequence ID" value="AAD21243.1"/>
    <property type="molecule type" value="mRNA"/>
</dbReference>
<dbReference type="SMR" id="Q9XYF6"/>
<dbReference type="VEuPathDB" id="ToxoDB:TGARI_263180"/>
<dbReference type="VEuPathDB" id="ToxoDB:TGCAST_263180"/>
<dbReference type="VEuPathDB" id="ToxoDB:TGCOUG_263180"/>
<dbReference type="VEuPathDB" id="ToxoDB:TGDOM2_263180"/>
<dbReference type="VEuPathDB" id="ToxoDB:TGFOU_263180A"/>
<dbReference type="VEuPathDB" id="ToxoDB:TGFOU_263180B"/>
<dbReference type="VEuPathDB" id="ToxoDB:TGGT1_263180"/>
<dbReference type="VEuPathDB" id="ToxoDB:TGMAS_263180"/>
<dbReference type="VEuPathDB" id="ToxoDB:TGME49_263180"/>
<dbReference type="VEuPathDB" id="ToxoDB:TGP89_263180A"/>
<dbReference type="VEuPathDB" id="ToxoDB:TGP89_263180B"/>
<dbReference type="VEuPathDB" id="ToxoDB:TGPRC2_263180A"/>
<dbReference type="VEuPathDB" id="ToxoDB:TGPRC2_263180B"/>
<dbReference type="VEuPathDB" id="ToxoDB:TGRH88_067840"/>
<dbReference type="VEuPathDB" id="ToxoDB:TGRUB_257470"/>
<dbReference type="VEuPathDB" id="ToxoDB:TGRUB_263180"/>
<dbReference type="VEuPathDB" id="ToxoDB:TGVAND_263180"/>
<dbReference type="VEuPathDB" id="ToxoDB:TGVEG_263180"/>
<dbReference type="GO" id="GO:0005737">
    <property type="term" value="C:cytoplasm"/>
    <property type="evidence" value="ECO:0007669"/>
    <property type="project" value="UniProtKB-SubCell"/>
</dbReference>
<dbReference type="GO" id="GO:0016459">
    <property type="term" value="C:myosin complex"/>
    <property type="evidence" value="ECO:0007669"/>
    <property type="project" value="UniProtKB-KW"/>
</dbReference>
<dbReference type="GO" id="GO:0005886">
    <property type="term" value="C:plasma membrane"/>
    <property type="evidence" value="ECO:0007669"/>
    <property type="project" value="UniProtKB-SubCell"/>
</dbReference>
<dbReference type="GO" id="GO:0051015">
    <property type="term" value="F:actin filament binding"/>
    <property type="evidence" value="ECO:0007669"/>
    <property type="project" value="TreeGrafter"/>
</dbReference>
<dbReference type="GO" id="GO:0005524">
    <property type="term" value="F:ATP binding"/>
    <property type="evidence" value="ECO:0007669"/>
    <property type="project" value="UniProtKB-KW"/>
</dbReference>
<dbReference type="GO" id="GO:0000146">
    <property type="term" value="F:microfilament motor activity"/>
    <property type="evidence" value="ECO:0007669"/>
    <property type="project" value="TreeGrafter"/>
</dbReference>
<dbReference type="GO" id="GO:0007015">
    <property type="term" value="P:actin filament organization"/>
    <property type="evidence" value="ECO:0007669"/>
    <property type="project" value="TreeGrafter"/>
</dbReference>
<dbReference type="CDD" id="cd14876">
    <property type="entry name" value="MYSc_Myo14"/>
    <property type="match status" value="1"/>
</dbReference>
<dbReference type="FunFam" id="1.10.10.820:FF:000001">
    <property type="entry name" value="Myosin heavy chain"/>
    <property type="match status" value="1"/>
</dbReference>
<dbReference type="Gene3D" id="1.10.10.820">
    <property type="match status" value="1"/>
</dbReference>
<dbReference type="Gene3D" id="1.20.5.4820">
    <property type="match status" value="1"/>
</dbReference>
<dbReference type="Gene3D" id="1.20.58.530">
    <property type="match status" value="1"/>
</dbReference>
<dbReference type="Gene3D" id="3.40.850.10">
    <property type="entry name" value="Kinesin motor domain"/>
    <property type="match status" value="1"/>
</dbReference>
<dbReference type="Gene3D" id="1.20.120.720">
    <property type="entry name" value="Myosin VI head, motor domain, U50 subdomain"/>
    <property type="match status" value="1"/>
</dbReference>
<dbReference type="InterPro" id="IPR036961">
    <property type="entry name" value="Kinesin_motor_dom_sf"/>
</dbReference>
<dbReference type="InterPro" id="IPR001609">
    <property type="entry name" value="Myosin_head_motor_dom-like"/>
</dbReference>
<dbReference type="InterPro" id="IPR036044">
    <property type="entry name" value="MYSc_Myo14"/>
</dbReference>
<dbReference type="InterPro" id="IPR027417">
    <property type="entry name" value="P-loop_NTPase"/>
</dbReference>
<dbReference type="PANTHER" id="PTHR13140">
    <property type="entry name" value="MYOSIN"/>
    <property type="match status" value="1"/>
</dbReference>
<dbReference type="PANTHER" id="PTHR13140:SF270">
    <property type="entry name" value="MYOSIN-12"/>
    <property type="match status" value="1"/>
</dbReference>
<dbReference type="Pfam" id="PF00063">
    <property type="entry name" value="Myosin_head"/>
    <property type="match status" value="1"/>
</dbReference>
<dbReference type="PRINTS" id="PR00193">
    <property type="entry name" value="MYOSINHEAVY"/>
</dbReference>
<dbReference type="SMART" id="SM00242">
    <property type="entry name" value="MYSc"/>
    <property type="match status" value="1"/>
</dbReference>
<dbReference type="SUPFAM" id="SSF52540">
    <property type="entry name" value="P-loop containing nucleoside triphosphate hydrolases"/>
    <property type="match status" value="1"/>
</dbReference>
<dbReference type="PROSITE" id="PS51456">
    <property type="entry name" value="MYOSIN_MOTOR"/>
    <property type="match status" value="1"/>
</dbReference>
<proteinExistence type="evidence at transcript level"/>
<keyword id="KW-0009">Actin-binding</keyword>
<keyword id="KW-0067">ATP-binding</keyword>
<keyword id="KW-1003">Cell membrane</keyword>
<keyword id="KW-0963">Cytoplasm</keyword>
<keyword id="KW-0472">Membrane</keyword>
<keyword id="KW-0505">Motor protein</keyword>
<keyword id="KW-0518">Myosin</keyword>
<keyword id="KW-0547">Nucleotide-binding</keyword>
<organism>
    <name type="scientific">Toxoplasma gondii</name>
    <dbReference type="NCBI Taxonomy" id="5811"/>
    <lineage>
        <taxon>Eukaryota</taxon>
        <taxon>Sar</taxon>
        <taxon>Alveolata</taxon>
        <taxon>Apicomplexa</taxon>
        <taxon>Conoidasida</taxon>
        <taxon>Coccidia</taxon>
        <taxon>Eucoccidiorida</taxon>
        <taxon>Eimeriorina</taxon>
        <taxon>Sarcocystidae</taxon>
        <taxon>Toxoplasma</taxon>
    </lineage>
</organism>
<protein>
    <recommendedName>
        <fullName>Myosin-D</fullName>
        <shortName>MyoD</shortName>
    </recommendedName>
    <alternativeName>
        <fullName>TgM-D</fullName>
    </alternativeName>
</protein>
<reference key="1">
    <citation type="journal article" date="2000" name="Mol. Biol. Cell">
        <title>A dibasic motif in the tail of a class XIV apicomplexan myosin is an essential determinant of plasma membrane localization.</title>
        <authorList>
            <person name="Hettmann C."/>
            <person name="Herm A."/>
            <person name="Geiter A."/>
            <person name="Frank B."/>
            <person name="Schwarz E."/>
            <person name="Soldati T."/>
            <person name="Soldati D."/>
        </authorList>
    </citation>
    <scope>NUCLEOTIDE SEQUENCE [MRNA]</scope>
</reference>